<comment type="function">
    <text evidence="1">Catalyzes the hydrolysis of the adenine ring of phosphoribosyl-AMP.</text>
</comment>
<comment type="catalytic activity">
    <reaction>
        <text>1-(5-phospho-beta-D-ribosyl)-5'-AMP + H2O = 1-(5-phospho-beta-D-ribosyl)-5-[(5-phospho-beta-D-ribosylamino)methylideneamino]imidazole-4-carboxamide</text>
        <dbReference type="Rhea" id="RHEA:20049"/>
        <dbReference type="ChEBI" id="CHEBI:15377"/>
        <dbReference type="ChEBI" id="CHEBI:58435"/>
        <dbReference type="ChEBI" id="CHEBI:59457"/>
        <dbReference type="EC" id="3.5.4.19"/>
    </reaction>
</comment>
<comment type="cofactor">
    <cofactor evidence="1">
        <name>Mg(2+)</name>
        <dbReference type="ChEBI" id="CHEBI:18420"/>
    </cofactor>
    <text evidence="1">Binds 1 Mg(2+) ion per subunit.</text>
</comment>
<comment type="cofactor">
    <cofactor evidence="1">
        <name>Zn(2+)</name>
        <dbReference type="ChEBI" id="CHEBI:29105"/>
    </cofactor>
    <text evidence="1">Binds 1 zinc ion per subunit.</text>
</comment>
<comment type="pathway">
    <text>Amino-acid biosynthesis; L-histidine biosynthesis; L-histidine from 5-phospho-alpha-D-ribose 1-diphosphate: step 3/9.</text>
</comment>
<comment type="subunit">
    <text evidence="1">Homodimer.</text>
</comment>
<comment type="subcellular location">
    <subcellularLocation>
        <location evidence="1">Cytoplasm</location>
    </subcellularLocation>
</comment>
<comment type="similarity">
    <text evidence="2">Belongs to the PRA-CH family.</text>
</comment>
<dbReference type="EC" id="3.5.4.19"/>
<dbReference type="EMBL" id="BX950229">
    <property type="protein sequence ID" value="CAF29836.1"/>
    <property type="molecule type" value="Genomic_DNA"/>
</dbReference>
<dbReference type="RefSeq" id="WP_011170224.1">
    <property type="nucleotide sequence ID" value="NC_005791.1"/>
</dbReference>
<dbReference type="SMR" id="P62391"/>
<dbReference type="STRING" id="267377.MMP0280"/>
<dbReference type="EnsemblBacteria" id="CAF29836">
    <property type="protein sequence ID" value="CAF29836"/>
    <property type="gene ID" value="MMP0280"/>
</dbReference>
<dbReference type="GeneID" id="41278702"/>
<dbReference type="KEGG" id="mmp:MMP0280"/>
<dbReference type="PATRIC" id="fig|267377.15.peg.283"/>
<dbReference type="eggNOG" id="arCOG02676">
    <property type="taxonomic scope" value="Archaea"/>
</dbReference>
<dbReference type="HOGENOM" id="CLU_048577_5_0_2"/>
<dbReference type="OrthoDB" id="5853at2157"/>
<dbReference type="UniPathway" id="UPA00031">
    <property type="reaction ID" value="UER00008"/>
</dbReference>
<dbReference type="Proteomes" id="UP000000590">
    <property type="component" value="Chromosome"/>
</dbReference>
<dbReference type="GO" id="GO:0005737">
    <property type="term" value="C:cytoplasm"/>
    <property type="evidence" value="ECO:0007669"/>
    <property type="project" value="UniProtKB-SubCell"/>
</dbReference>
<dbReference type="GO" id="GO:0046872">
    <property type="term" value="F:metal ion binding"/>
    <property type="evidence" value="ECO:0007669"/>
    <property type="project" value="UniProtKB-KW"/>
</dbReference>
<dbReference type="GO" id="GO:0004635">
    <property type="term" value="F:phosphoribosyl-AMP cyclohydrolase activity"/>
    <property type="evidence" value="ECO:0007669"/>
    <property type="project" value="UniProtKB-EC"/>
</dbReference>
<dbReference type="GO" id="GO:0000105">
    <property type="term" value="P:L-histidine biosynthetic process"/>
    <property type="evidence" value="ECO:0007669"/>
    <property type="project" value="UniProtKB-UniPathway"/>
</dbReference>
<dbReference type="FunFam" id="3.10.20.810:FF:000001">
    <property type="entry name" value="Histidine biosynthesis bifunctional protein HisIE"/>
    <property type="match status" value="1"/>
</dbReference>
<dbReference type="Gene3D" id="3.10.20.810">
    <property type="entry name" value="Phosphoribosyl-AMP cyclohydrolase"/>
    <property type="match status" value="1"/>
</dbReference>
<dbReference type="InterPro" id="IPR002496">
    <property type="entry name" value="PRib_AMP_CycHydrolase_dom"/>
</dbReference>
<dbReference type="InterPro" id="IPR038019">
    <property type="entry name" value="PRib_AMP_CycHydrolase_sf"/>
</dbReference>
<dbReference type="NCBIfam" id="NF000768">
    <property type="entry name" value="PRK00051.1"/>
    <property type="match status" value="1"/>
</dbReference>
<dbReference type="PANTHER" id="PTHR42945">
    <property type="entry name" value="HISTIDINE BIOSYNTHESIS BIFUNCTIONAL PROTEIN"/>
    <property type="match status" value="1"/>
</dbReference>
<dbReference type="PANTHER" id="PTHR42945:SF1">
    <property type="entry name" value="HISTIDINE BIOSYNTHESIS BIFUNCTIONAL PROTEIN HIS7"/>
    <property type="match status" value="1"/>
</dbReference>
<dbReference type="Pfam" id="PF01502">
    <property type="entry name" value="PRA-CH"/>
    <property type="match status" value="1"/>
</dbReference>
<dbReference type="SUPFAM" id="SSF141734">
    <property type="entry name" value="HisI-like"/>
    <property type="match status" value="1"/>
</dbReference>
<gene>
    <name type="primary">hisI</name>
    <name type="ordered locus">MMP0280</name>
</gene>
<evidence type="ECO:0000250" key="1"/>
<evidence type="ECO:0000305" key="2"/>
<reference key="1">
    <citation type="journal article" date="2004" name="J. Bacteriol.">
        <title>Complete genome sequence of the genetically tractable hydrogenotrophic methanogen Methanococcus maripaludis.</title>
        <authorList>
            <person name="Hendrickson E.L."/>
            <person name="Kaul R."/>
            <person name="Zhou Y."/>
            <person name="Bovee D."/>
            <person name="Chapman P."/>
            <person name="Chung J."/>
            <person name="Conway de Macario E."/>
            <person name="Dodsworth J.A."/>
            <person name="Gillett W."/>
            <person name="Graham D.E."/>
            <person name="Hackett M."/>
            <person name="Haydock A.K."/>
            <person name="Kang A."/>
            <person name="Land M.L."/>
            <person name="Levy R."/>
            <person name="Lie T.J."/>
            <person name="Major T.A."/>
            <person name="Moore B.C."/>
            <person name="Porat I."/>
            <person name="Palmeiri A."/>
            <person name="Rouse G."/>
            <person name="Saenphimmachak C."/>
            <person name="Soell D."/>
            <person name="Van Dien S."/>
            <person name="Wang T."/>
            <person name="Whitman W.B."/>
            <person name="Xia Q."/>
            <person name="Zhang Y."/>
            <person name="Larimer F.W."/>
            <person name="Olson M.V."/>
            <person name="Leigh J.A."/>
        </authorList>
    </citation>
    <scope>NUCLEOTIDE SEQUENCE [LARGE SCALE GENOMIC DNA]</scope>
    <source>
        <strain>DSM 14266 / JCM 13030 / NBRC 101832 / S2 / LL</strain>
    </source>
</reference>
<proteinExistence type="inferred from homology"/>
<name>HIS3_METMP</name>
<feature type="chain" id="PRO_0000136510" description="Phosphoribosyl-AMP cyclohydrolase">
    <location>
        <begin position="1"/>
        <end position="129"/>
    </location>
</feature>
<feature type="binding site" evidence="1">
    <location>
        <position position="85"/>
    </location>
    <ligand>
        <name>Mg(2+)</name>
        <dbReference type="ChEBI" id="CHEBI:18420"/>
    </ligand>
</feature>
<feature type="binding site" evidence="1">
    <location>
        <position position="86"/>
    </location>
    <ligand>
        <name>Zn(2+)</name>
        <dbReference type="ChEBI" id="CHEBI:29105"/>
        <note>ligand shared between dimeric partners</note>
    </ligand>
</feature>
<feature type="binding site" evidence="1">
    <location>
        <position position="87"/>
    </location>
    <ligand>
        <name>Mg(2+)</name>
        <dbReference type="ChEBI" id="CHEBI:18420"/>
    </ligand>
</feature>
<feature type="binding site" evidence="1">
    <location>
        <position position="89"/>
    </location>
    <ligand>
        <name>Mg(2+)</name>
        <dbReference type="ChEBI" id="CHEBI:18420"/>
    </ligand>
</feature>
<feature type="binding site" evidence="1">
    <location>
        <position position="102"/>
    </location>
    <ligand>
        <name>Zn(2+)</name>
        <dbReference type="ChEBI" id="CHEBI:29105"/>
        <note>ligand shared between dimeric partners</note>
    </ligand>
</feature>
<feature type="binding site" evidence="1">
    <location>
        <position position="109"/>
    </location>
    <ligand>
        <name>Zn(2+)</name>
        <dbReference type="ChEBI" id="CHEBI:29105"/>
        <note>ligand shared between dimeric partners</note>
    </ligand>
</feature>
<sequence>MDKNIKEIIKNMDLKFRNIDGKKLLLAISTDKQKNVLMTAFMSEESLEKSIETGYMHYYSTSRDKIWKKGEESKNVQKIIDVYRDCDGDALLFTVEQTGWACHEGYMSCFHNKIDLNTGDSTVIGTKLD</sequence>
<organism>
    <name type="scientific">Methanococcus maripaludis (strain DSM 14266 / JCM 13030 / NBRC 101832 / S2 / LL)</name>
    <dbReference type="NCBI Taxonomy" id="267377"/>
    <lineage>
        <taxon>Archaea</taxon>
        <taxon>Methanobacteriati</taxon>
        <taxon>Methanobacteriota</taxon>
        <taxon>Methanomada group</taxon>
        <taxon>Methanococci</taxon>
        <taxon>Methanococcales</taxon>
        <taxon>Methanococcaceae</taxon>
        <taxon>Methanococcus</taxon>
    </lineage>
</organism>
<accession>P62391</accession>
<protein>
    <recommendedName>
        <fullName>Phosphoribosyl-AMP cyclohydrolase</fullName>
        <shortName>PRA-CH</shortName>
        <ecNumber>3.5.4.19</ecNumber>
    </recommendedName>
</protein>
<keyword id="KW-0028">Amino-acid biosynthesis</keyword>
<keyword id="KW-0963">Cytoplasm</keyword>
<keyword id="KW-0368">Histidine biosynthesis</keyword>
<keyword id="KW-0378">Hydrolase</keyword>
<keyword id="KW-0460">Magnesium</keyword>
<keyword id="KW-0479">Metal-binding</keyword>
<keyword id="KW-1185">Reference proteome</keyword>
<keyword id="KW-0862">Zinc</keyword>